<comment type="function">
    <text evidence="3 4">Transaminase involved in tyrosine breakdown. Converts tyrosine to p-hydroxyphenylpyruvate. Can catalyze the reverse reaction, using glutamic acid, with 2-oxoglutarate as cosubstrate (in vitro). Has much lower affinity and transaminase activity towards phenylalanine.</text>
</comment>
<comment type="catalytic activity">
    <reaction evidence="3 4">
        <text>L-tyrosine + 2-oxoglutarate = 3-(4-hydroxyphenyl)pyruvate + L-glutamate</text>
        <dbReference type="Rhea" id="RHEA:15093"/>
        <dbReference type="ChEBI" id="CHEBI:16810"/>
        <dbReference type="ChEBI" id="CHEBI:29985"/>
        <dbReference type="ChEBI" id="CHEBI:36242"/>
        <dbReference type="ChEBI" id="CHEBI:58315"/>
        <dbReference type="EC" id="2.6.1.5"/>
    </reaction>
</comment>
<comment type="cofactor">
    <cofactor evidence="5">
        <name>pyridoxal 5'-phosphate</name>
        <dbReference type="ChEBI" id="CHEBI:597326"/>
    </cofactor>
</comment>
<comment type="pathway">
    <text>Amino-acid degradation; L-phenylalanine degradation; acetoacetate and fumarate from L-phenylalanine: step 2/6.</text>
</comment>
<comment type="subunit">
    <text evidence="7">Homodimer.</text>
</comment>
<comment type="interaction">
    <interactant intactId="EBI-12046643">
        <id>P17735</id>
    </interactant>
    <interactant intactId="EBI-746653">
        <id>P15104</id>
        <label>GLUL</label>
    </interactant>
    <organismsDiffer>false</organismsDiffer>
    <experiments>3</experiments>
</comment>
<comment type="interaction">
    <interactant intactId="EBI-12046643">
        <id>P17735</id>
    </interactant>
    <interactant intactId="EBI-747754">
        <id>P28799</id>
        <label>GRN</label>
    </interactant>
    <organismsDiffer>false</organismsDiffer>
    <experiments>3</experiments>
</comment>
<comment type="interaction">
    <interactant intactId="EBI-12046643">
        <id>P17735</id>
    </interactant>
    <interactant intactId="EBI-25860013">
        <id>P28799-2</id>
        <label>GRN</label>
    </interactant>
    <organismsDiffer>false</organismsDiffer>
    <experiments>3</experiments>
</comment>
<comment type="interaction">
    <interactant intactId="EBI-12046643">
        <id>P17735</id>
    </interactant>
    <interactant intactId="EBI-12046643">
        <id>P17735</id>
        <label>TAT</label>
    </interactant>
    <organismsDiffer>false</organismsDiffer>
    <experiments>5</experiments>
</comment>
<comment type="interaction">
    <interactant intactId="EBI-12046643">
        <id>P17735</id>
    </interactant>
    <interactant intactId="EBI-954357">
        <id>Q05086</id>
        <label>UBE3A</label>
    </interactant>
    <organismsDiffer>false</organismsDiffer>
    <experiments>3</experiments>
</comment>
<comment type="interaction">
    <interactant intactId="EBI-12046643">
        <id>P17735</id>
    </interactant>
    <interactant intactId="EBI-11026619">
        <id>Q05086-3</id>
        <label>UBE3A</label>
    </interactant>
    <organismsDiffer>false</organismsDiffer>
    <experiments>11</experiments>
</comment>
<comment type="disease" evidence="2">
    <disease id="DI-01108">
        <name>Tyrosinemia 2</name>
        <acronym>TYRSN2</acronym>
        <description>An inborn error of metabolism characterized by elevations of tyrosine in the blood and urine, and oculocutaneous manifestations. Typical features include palmoplantar keratosis, painful corneal ulcers, and intellectual disability.</description>
        <dbReference type="MIM" id="276600"/>
    </disease>
    <text>The disease is caused by variants affecting the gene represented in this entry.</text>
</comment>
<comment type="similarity">
    <text evidence="6">Belongs to the class-I pyridoxal-phosphate-dependent aminotransferase family.</text>
</comment>
<name>ATTY_HUMAN</name>
<organism>
    <name type="scientific">Homo sapiens</name>
    <name type="common">Human</name>
    <dbReference type="NCBI Taxonomy" id="9606"/>
    <lineage>
        <taxon>Eukaryota</taxon>
        <taxon>Metazoa</taxon>
        <taxon>Chordata</taxon>
        <taxon>Craniata</taxon>
        <taxon>Vertebrata</taxon>
        <taxon>Euteleostomi</taxon>
        <taxon>Mammalia</taxon>
        <taxon>Eutheria</taxon>
        <taxon>Euarchontoglires</taxon>
        <taxon>Primates</taxon>
        <taxon>Haplorrhini</taxon>
        <taxon>Catarrhini</taxon>
        <taxon>Hominidae</taxon>
        <taxon>Homo</taxon>
    </lineage>
</organism>
<proteinExistence type="evidence at protein level"/>
<evidence type="ECO:0000250" key="1">
    <source>
        <dbReference type="UniProtKB" id="P04694"/>
    </source>
</evidence>
<evidence type="ECO:0000269" key="2">
    <source>
    </source>
</evidence>
<evidence type="ECO:0000269" key="3">
    <source>
    </source>
</evidence>
<evidence type="ECO:0000269" key="4">
    <source>
    </source>
</evidence>
<evidence type="ECO:0000269" key="5">
    <source ref="8"/>
</evidence>
<evidence type="ECO:0000305" key="6"/>
<evidence type="ECO:0000305" key="7">
    <source ref="8"/>
</evidence>
<evidence type="ECO:0007744" key="8">
    <source>
        <dbReference type="PDB" id="3DYD"/>
    </source>
</evidence>
<evidence type="ECO:0007744" key="9">
    <source>
    </source>
</evidence>
<evidence type="ECO:0007829" key="10">
    <source>
        <dbReference type="PDB" id="3DYD"/>
    </source>
</evidence>
<keyword id="KW-0002">3D-structure</keyword>
<keyword id="KW-0007">Acetylation</keyword>
<keyword id="KW-0032">Aminotransferase</keyword>
<keyword id="KW-0225">Disease variant</keyword>
<keyword id="KW-0991">Intellectual disability</keyword>
<keyword id="KW-1007">Palmoplantar keratoderma</keyword>
<keyword id="KW-0585">Phenylalanine catabolism</keyword>
<keyword id="KW-0597">Phosphoprotein</keyword>
<keyword id="KW-1267">Proteomics identification</keyword>
<keyword id="KW-0663">Pyridoxal phosphate</keyword>
<keyword id="KW-1185">Reference proteome</keyword>
<keyword id="KW-0808">Transferase</keyword>
<keyword id="KW-0828">Tyrosine catabolism</keyword>
<gene>
    <name type="primary">TAT</name>
</gene>
<dbReference type="EC" id="2.6.1.5"/>
<dbReference type="EMBL" id="X52520">
    <property type="protein sequence ID" value="CAA36750.1"/>
    <property type="molecule type" value="mRNA"/>
</dbReference>
<dbReference type="EMBL" id="X52509">
    <property type="protein sequence ID" value="CAA36749.1"/>
    <property type="molecule type" value="Genomic_DNA"/>
</dbReference>
<dbReference type="EMBL" id="X52510">
    <property type="protein sequence ID" value="CAA36749.1"/>
    <property type="status" value="JOINED"/>
    <property type="molecule type" value="Genomic_DNA"/>
</dbReference>
<dbReference type="EMBL" id="X52511">
    <property type="protein sequence ID" value="CAA36749.1"/>
    <property type="status" value="JOINED"/>
    <property type="molecule type" value="Genomic_DNA"/>
</dbReference>
<dbReference type="EMBL" id="X52512">
    <property type="protein sequence ID" value="CAA36749.1"/>
    <property type="status" value="JOINED"/>
    <property type="molecule type" value="Genomic_DNA"/>
</dbReference>
<dbReference type="EMBL" id="X52513">
    <property type="protein sequence ID" value="CAA36749.1"/>
    <property type="status" value="JOINED"/>
    <property type="molecule type" value="Genomic_DNA"/>
</dbReference>
<dbReference type="EMBL" id="X52514">
    <property type="protein sequence ID" value="CAA36749.1"/>
    <property type="status" value="JOINED"/>
    <property type="molecule type" value="Genomic_DNA"/>
</dbReference>
<dbReference type="EMBL" id="X52515">
    <property type="protein sequence ID" value="CAA36749.1"/>
    <property type="status" value="JOINED"/>
    <property type="molecule type" value="Genomic_DNA"/>
</dbReference>
<dbReference type="EMBL" id="X52516">
    <property type="protein sequence ID" value="CAA36749.1"/>
    <property type="status" value="JOINED"/>
    <property type="molecule type" value="Genomic_DNA"/>
</dbReference>
<dbReference type="EMBL" id="X52517">
    <property type="protein sequence ID" value="CAA36749.1"/>
    <property type="status" value="JOINED"/>
    <property type="molecule type" value="Genomic_DNA"/>
</dbReference>
<dbReference type="EMBL" id="X52518">
    <property type="protein sequence ID" value="CAA36749.1"/>
    <property type="status" value="JOINED"/>
    <property type="molecule type" value="Genomic_DNA"/>
</dbReference>
<dbReference type="EMBL" id="X52519">
    <property type="protein sequence ID" value="CAA36749.1"/>
    <property type="status" value="JOINED"/>
    <property type="molecule type" value="Genomic_DNA"/>
</dbReference>
<dbReference type="EMBL" id="X55675">
    <property type="protein sequence ID" value="CAA39210.1"/>
    <property type="molecule type" value="mRNA"/>
</dbReference>
<dbReference type="EMBL" id="AK313380">
    <property type="protein sequence ID" value="BAG36178.1"/>
    <property type="molecule type" value="mRNA"/>
</dbReference>
<dbReference type="EMBL" id="CH471166">
    <property type="protein sequence ID" value="EAW59230.1"/>
    <property type="molecule type" value="Genomic_DNA"/>
</dbReference>
<dbReference type="EMBL" id="CH471166">
    <property type="protein sequence ID" value="EAW59231.1"/>
    <property type="molecule type" value="Genomic_DNA"/>
</dbReference>
<dbReference type="CCDS" id="CCDS10903.1"/>
<dbReference type="PIR" id="S10887">
    <property type="entry name" value="S10887"/>
</dbReference>
<dbReference type="RefSeq" id="NP_000344.1">
    <property type="nucleotide sequence ID" value="NM_000353.3"/>
</dbReference>
<dbReference type="PDB" id="3DYD">
    <property type="method" value="X-ray"/>
    <property type="resolution" value="2.30 A"/>
    <property type="chains" value="A/B=41-444"/>
</dbReference>
<dbReference type="PDBsum" id="3DYD"/>
<dbReference type="SMR" id="P17735"/>
<dbReference type="BioGRID" id="112761">
    <property type="interactions" value="6"/>
</dbReference>
<dbReference type="FunCoup" id="P17735">
    <property type="interactions" value="96"/>
</dbReference>
<dbReference type="IntAct" id="P17735">
    <property type="interactions" value="7"/>
</dbReference>
<dbReference type="STRING" id="9606.ENSP00000348234"/>
<dbReference type="ChEMBL" id="CHEMBL3043"/>
<dbReference type="DrugBank" id="DB00142">
    <property type="generic name" value="Glutamic acid"/>
</dbReference>
<dbReference type="DrugBank" id="DB00120">
    <property type="generic name" value="Phenylalanine"/>
</dbReference>
<dbReference type="DrugBank" id="DB00114">
    <property type="generic name" value="Pyridoxal phosphate"/>
</dbReference>
<dbReference type="DrugBank" id="DB00135">
    <property type="generic name" value="Tyrosine"/>
</dbReference>
<dbReference type="iPTMnet" id="P17735"/>
<dbReference type="PhosphoSitePlus" id="P17735"/>
<dbReference type="BioMuta" id="TAT"/>
<dbReference type="DMDM" id="114713"/>
<dbReference type="jPOST" id="P17735"/>
<dbReference type="MassIVE" id="P17735"/>
<dbReference type="PaxDb" id="9606-ENSP00000348234"/>
<dbReference type="PeptideAtlas" id="P17735"/>
<dbReference type="ProteomicsDB" id="53512"/>
<dbReference type="Antibodypedia" id="30099">
    <property type="antibodies" value="279 antibodies from 29 providers"/>
</dbReference>
<dbReference type="DNASU" id="6898"/>
<dbReference type="Ensembl" id="ENST00000355962.5">
    <property type="protein sequence ID" value="ENSP00000348234.4"/>
    <property type="gene ID" value="ENSG00000198650.11"/>
</dbReference>
<dbReference type="GeneID" id="6898"/>
<dbReference type="KEGG" id="hsa:6898"/>
<dbReference type="MANE-Select" id="ENST00000355962.5">
    <property type="protein sequence ID" value="ENSP00000348234.4"/>
    <property type="RefSeq nucleotide sequence ID" value="NM_000353.3"/>
    <property type="RefSeq protein sequence ID" value="NP_000344.1"/>
</dbReference>
<dbReference type="UCSC" id="uc002fap.3">
    <property type="organism name" value="human"/>
</dbReference>
<dbReference type="AGR" id="HGNC:11573"/>
<dbReference type="CTD" id="6898"/>
<dbReference type="DisGeNET" id="6898"/>
<dbReference type="GeneCards" id="TAT"/>
<dbReference type="GeneReviews" id="TAT"/>
<dbReference type="HGNC" id="HGNC:11573">
    <property type="gene designation" value="TAT"/>
</dbReference>
<dbReference type="HPA" id="ENSG00000198650">
    <property type="expression patterns" value="Tissue enriched (liver)"/>
</dbReference>
<dbReference type="MalaCards" id="TAT"/>
<dbReference type="MIM" id="276600">
    <property type="type" value="phenotype"/>
</dbReference>
<dbReference type="MIM" id="613018">
    <property type="type" value="gene"/>
</dbReference>
<dbReference type="neXtProt" id="NX_P17735"/>
<dbReference type="OpenTargets" id="ENSG00000198650"/>
<dbReference type="Orphanet" id="28378">
    <property type="disease" value="Tyrosinemia type 2"/>
</dbReference>
<dbReference type="PharmGKB" id="PA36338"/>
<dbReference type="VEuPathDB" id="HostDB:ENSG00000198650"/>
<dbReference type="eggNOG" id="KOG0259">
    <property type="taxonomic scope" value="Eukaryota"/>
</dbReference>
<dbReference type="GeneTree" id="ENSGT00940000156704"/>
<dbReference type="HOGENOM" id="CLU_017584_4_2_1"/>
<dbReference type="InParanoid" id="P17735"/>
<dbReference type="OMA" id="CALDLCI"/>
<dbReference type="OrthoDB" id="7042322at2759"/>
<dbReference type="PAN-GO" id="P17735">
    <property type="GO annotations" value="3 GO annotations based on evolutionary models"/>
</dbReference>
<dbReference type="PhylomeDB" id="P17735"/>
<dbReference type="TreeFam" id="TF105999"/>
<dbReference type="BioCyc" id="MetaCyc:HS06761-MONOMER"/>
<dbReference type="PathwayCommons" id="P17735"/>
<dbReference type="Reactome" id="R-HSA-8963684">
    <property type="pathway name" value="Tyrosine catabolism"/>
</dbReference>
<dbReference type="SignaLink" id="P17735"/>
<dbReference type="UniPathway" id="UPA00139">
    <property type="reaction ID" value="UER00338"/>
</dbReference>
<dbReference type="BioGRID-ORCS" id="6898">
    <property type="hits" value="9 hits in 1155 CRISPR screens"/>
</dbReference>
<dbReference type="ChiTaRS" id="TAT">
    <property type="organism name" value="human"/>
</dbReference>
<dbReference type="EvolutionaryTrace" id="P17735"/>
<dbReference type="GenomeRNAi" id="6898"/>
<dbReference type="Pharos" id="P17735">
    <property type="development level" value="Tbio"/>
</dbReference>
<dbReference type="PRO" id="PR:P17735"/>
<dbReference type="Proteomes" id="UP000005640">
    <property type="component" value="Chromosome 16"/>
</dbReference>
<dbReference type="RNAct" id="P17735">
    <property type="molecule type" value="protein"/>
</dbReference>
<dbReference type="Bgee" id="ENSG00000198650">
    <property type="expression patterns" value="Expressed in right lobe of liver and 105 other cell types or tissues"/>
</dbReference>
<dbReference type="ExpressionAtlas" id="P17735">
    <property type="expression patterns" value="baseline and differential"/>
</dbReference>
<dbReference type="GO" id="GO:0005829">
    <property type="term" value="C:cytosol"/>
    <property type="evidence" value="ECO:0000304"/>
    <property type="project" value="Reactome"/>
</dbReference>
<dbReference type="GO" id="GO:0016597">
    <property type="term" value="F:amino acid binding"/>
    <property type="evidence" value="ECO:0007669"/>
    <property type="project" value="Ensembl"/>
</dbReference>
<dbReference type="GO" id="GO:0042802">
    <property type="term" value="F:identical protein binding"/>
    <property type="evidence" value="ECO:0000353"/>
    <property type="project" value="IntAct"/>
</dbReference>
<dbReference type="GO" id="GO:0004838">
    <property type="term" value="F:L-tyrosine-2-oxoglutarate transaminase activity"/>
    <property type="evidence" value="ECO:0000314"/>
    <property type="project" value="UniProtKB"/>
</dbReference>
<dbReference type="GO" id="GO:0030170">
    <property type="term" value="F:pyridoxal phosphate binding"/>
    <property type="evidence" value="ECO:0007669"/>
    <property type="project" value="InterPro"/>
</dbReference>
<dbReference type="GO" id="GO:0006103">
    <property type="term" value="P:2-oxoglutarate metabolic process"/>
    <property type="evidence" value="ECO:0000314"/>
    <property type="project" value="UniProtKB"/>
</dbReference>
<dbReference type="GO" id="GO:0009058">
    <property type="term" value="P:biosynthetic process"/>
    <property type="evidence" value="ECO:0007669"/>
    <property type="project" value="InterPro"/>
</dbReference>
<dbReference type="GO" id="GO:0006536">
    <property type="term" value="P:glutamate metabolic process"/>
    <property type="evidence" value="ECO:0000314"/>
    <property type="project" value="UniProtKB"/>
</dbReference>
<dbReference type="GO" id="GO:0006559">
    <property type="term" value="P:L-phenylalanine catabolic process"/>
    <property type="evidence" value="ECO:0000318"/>
    <property type="project" value="GO_Central"/>
</dbReference>
<dbReference type="GO" id="GO:0071548">
    <property type="term" value="P:response to dexamethasone"/>
    <property type="evidence" value="ECO:0007669"/>
    <property type="project" value="Ensembl"/>
</dbReference>
<dbReference type="GO" id="GO:0046689">
    <property type="term" value="P:response to mercury ion"/>
    <property type="evidence" value="ECO:0007669"/>
    <property type="project" value="Ensembl"/>
</dbReference>
<dbReference type="GO" id="GO:0006979">
    <property type="term" value="P:response to oxidative stress"/>
    <property type="evidence" value="ECO:0007669"/>
    <property type="project" value="Ensembl"/>
</dbReference>
<dbReference type="GO" id="GO:0006572">
    <property type="term" value="P:tyrosine catabolic process"/>
    <property type="evidence" value="ECO:0000314"/>
    <property type="project" value="UniProtKB"/>
</dbReference>
<dbReference type="CDD" id="cd00609">
    <property type="entry name" value="AAT_like"/>
    <property type="match status" value="1"/>
</dbReference>
<dbReference type="FunFam" id="3.90.1150.10:FF:000040">
    <property type="entry name" value="Tyrosine aminotransferase"/>
    <property type="match status" value="1"/>
</dbReference>
<dbReference type="FunFam" id="3.40.640.10:FF:000048">
    <property type="entry name" value="tyrosine aminotransferase"/>
    <property type="match status" value="1"/>
</dbReference>
<dbReference type="Gene3D" id="3.90.1150.10">
    <property type="entry name" value="Aspartate Aminotransferase, domain 1"/>
    <property type="match status" value="1"/>
</dbReference>
<dbReference type="Gene3D" id="3.40.640.10">
    <property type="entry name" value="Type I PLP-dependent aspartate aminotransferase-like (Major domain)"/>
    <property type="match status" value="1"/>
</dbReference>
<dbReference type="InterPro" id="IPR004839">
    <property type="entry name" value="Aminotransferase_I/II_large"/>
</dbReference>
<dbReference type="InterPro" id="IPR004838">
    <property type="entry name" value="NHTrfase_class1_PyrdxlP-BS"/>
</dbReference>
<dbReference type="InterPro" id="IPR015424">
    <property type="entry name" value="PyrdxlP-dep_Trfase"/>
</dbReference>
<dbReference type="InterPro" id="IPR015421">
    <property type="entry name" value="PyrdxlP-dep_Trfase_major"/>
</dbReference>
<dbReference type="InterPro" id="IPR015422">
    <property type="entry name" value="PyrdxlP-dep_Trfase_small"/>
</dbReference>
<dbReference type="InterPro" id="IPR011715">
    <property type="entry name" value="Tyr_aminoTrfase_ubiquitination"/>
</dbReference>
<dbReference type="InterPro" id="IPR005958">
    <property type="entry name" value="TyrNic_aminoTrfase"/>
</dbReference>
<dbReference type="InterPro" id="IPR005957">
    <property type="entry name" value="Tyrosine_aminoTrfase"/>
</dbReference>
<dbReference type="NCBIfam" id="TIGR01264">
    <property type="entry name" value="tyr_amTase_E"/>
    <property type="match status" value="1"/>
</dbReference>
<dbReference type="NCBIfam" id="TIGR01265">
    <property type="entry name" value="tyr_nico_aTase"/>
    <property type="match status" value="1"/>
</dbReference>
<dbReference type="PANTHER" id="PTHR45744">
    <property type="entry name" value="TYROSINE AMINOTRANSFERASE"/>
    <property type="match status" value="1"/>
</dbReference>
<dbReference type="PANTHER" id="PTHR45744:SF2">
    <property type="entry name" value="TYROSINE AMINOTRANSFERASE"/>
    <property type="match status" value="1"/>
</dbReference>
<dbReference type="Pfam" id="PF00155">
    <property type="entry name" value="Aminotran_1_2"/>
    <property type="match status" value="1"/>
</dbReference>
<dbReference type="Pfam" id="PF07706">
    <property type="entry name" value="TAT_ubiq"/>
    <property type="match status" value="1"/>
</dbReference>
<dbReference type="PIRSF" id="PIRSF000517">
    <property type="entry name" value="Tyr_transaminase"/>
    <property type="match status" value="1"/>
</dbReference>
<dbReference type="SUPFAM" id="SSF53383">
    <property type="entry name" value="PLP-dependent transferases"/>
    <property type="match status" value="1"/>
</dbReference>
<dbReference type="PROSITE" id="PS00105">
    <property type="entry name" value="AA_TRANSFER_CLASS_1"/>
    <property type="match status" value="1"/>
</dbReference>
<reference key="1">
    <citation type="journal article" date="1990" name="Nucleic Acids Res.">
        <title>Isolation and characterization of the human tyrosine aminotransferase gene.</title>
        <authorList>
            <person name="Rettenmeier R."/>
            <person name="Natt E."/>
            <person name="Zentgraf H."/>
            <person name="Scherer G."/>
        </authorList>
    </citation>
    <scope>NUCLEOTIDE SEQUENCE [MRNA]</scope>
</reference>
<reference key="2">
    <citation type="journal article" date="1994" name="Bioorg. Khim.">
        <title>Nucleotide sequence of the human tyrosine aminotransferase gene.</title>
        <authorList>
            <person name="Zelenin S.M."/>
            <person name="Mertvetsov N.P."/>
        </authorList>
    </citation>
    <scope>NUCLEOTIDE SEQUENCE [GENOMIC DNA]</scope>
</reference>
<reference key="3">
    <citation type="journal article" date="1995" name="Biochim. Biophys. Acta">
        <title>Cloning and expression of human tyrosine aminotransferase cDNA.</title>
        <authorList>
            <person name="Seralini G.E."/>
            <person name="Luu-The V."/>
            <person name="Labrie F."/>
        </authorList>
    </citation>
    <scope>NUCLEOTIDE SEQUENCE [MRNA]</scope>
    <scope>FUNCTION</scope>
    <scope>CATALYTIC ACTIVITY</scope>
    <source>
        <tissue>Liver</tissue>
    </source>
</reference>
<reference key="4">
    <citation type="journal article" date="2004" name="Nat. Genet.">
        <title>Complete sequencing and characterization of 21,243 full-length human cDNAs.</title>
        <authorList>
            <person name="Ota T."/>
            <person name="Suzuki Y."/>
            <person name="Nishikawa T."/>
            <person name="Otsuki T."/>
            <person name="Sugiyama T."/>
            <person name="Irie R."/>
            <person name="Wakamatsu A."/>
            <person name="Hayashi K."/>
            <person name="Sato H."/>
            <person name="Nagai K."/>
            <person name="Kimura K."/>
            <person name="Makita H."/>
            <person name="Sekine M."/>
            <person name="Obayashi M."/>
            <person name="Nishi T."/>
            <person name="Shibahara T."/>
            <person name="Tanaka T."/>
            <person name="Ishii S."/>
            <person name="Yamamoto J."/>
            <person name="Saito K."/>
            <person name="Kawai Y."/>
            <person name="Isono Y."/>
            <person name="Nakamura Y."/>
            <person name="Nagahari K."/>
            <person name="Murakami K."/>
            <person name="Yasuda T."/>
            <person name="Iwayanagi T."/>
            <person name="Wagatsuma M."/>
            <person name="Shiratori A."/>
            <person name="Sudo H."/>
            <person name="Hosoiri T."/>
            <person name="Kaku Y."/>
            <person name="Kodaira H."/>
            <person name="Kondo H."/>
            <person name="Sugawara M."/>
            <person name="Takahashi M."/>
            <person name="Kanda K."/>
            <person name="Yokoi T."/>
            <person name="Furuya T."/>
            <person name="Kikkawa E."/>
            <person name="Omura Y."/>
            <person name="Abe K."/>
            <person name="Kamihara K."/>
            <person name="Katsuta N."/>
            <person name="Sato K."/>
            <person name="Tanikawa M."/>
            <person name="Yamazaki M."/>
            <person name="Ninomiya K."/>
            <person name="Ishibashi T."/>
            <person name="Yamashita H."/>
            <person name="Murakawa K."/>
            <person name="Fujimori K."/>
            <person name="Tanai H."/>
            <person name="Kimata M."/>
            <person name="Watanabe M."/>
            <person name="Hiraoka S."/>
            <person name="Chiba Y."/>
            <person name="Ishida S."/>
            <person name="Ono Y."/>
            <person name="Takiguchi S."/>
            <person name="Watanabe S."/>
            <person name="Yosida M."/>
            <person name="Hotuta T."/>
            <person name="Kusano J."/>
            <person name="Kanehori K."/>
            <person name="Takahashi-Fujii A."/>
            <person name="Hara H."/>
            <person name="Tanase T.-O."/>
            <person name="Nomura Y."/>
            <person name="Togiya S."/>
            <person name="Komai F."/>
            <person name="Hara R."/>
            <person name="Takeuchi K."/>
            <person name="Arita M."/>
            <person name="Imose N."/>
            <person name="Musashino K."/>
            <person name="Yuuki H."/>
            <person name="Oshima A."/>
            <person name="Sasaki N."/>
            <person name="Aotsuka S."/>
            <person name="Yoshikawa Y."/>
            <person name="Matsunawa H."/>
            <person name="Ichihara T."/>
            <person name="Shiohata N."/>
            <person name="Sano S."/>
            <person name="Moriya S."/>
            <person name="Momiyama H."/>
            <person name="Satoh N."/>
            <person name="Takami S."/>
            <person name="Terashima Y."/>
            <person name="Suzuki O."/>
            <person name="Nakagawa S."/>
            <person name="Senoh A."/>
            <person name="Mizoguchi H."/>
            <person name="Goto Y."/>
            <person name="Shimizu F."/>
            <person name="Wakebe H."/>
            <person name="Hishigaki H."/>
            <person name="Watanabe T."/>
            <person name="Sugiyama A."/>
            <person name="Takemoto M."/>
            <person name="Kawakami B."/>
            <person name="Yamazaki M."/>
            <person name="Watanabe K."/>
            <person name="Kumagai A."/>
            <person name="Itakura S."/>
            <person name="Fukuzumi Y."/>
            <person name="Fujimori Y."/>
            <person name="Komiyama M."/>
            <person name="Tashiro H."/>
            <person name="Tanigami A."/>
            <person name="Fujiwara T."/>
            <person name="Ono T."/>
            <person name="Yamada K."/>
            <person name="Fujii Y."/>
            <person name="Ozaki K."/>
            <person name="Hirao M."/>
            <person name="Ohmori Y."/>
            <person name="Kawabata A."/>
            <person name="Hikiji T."/>
            <person name="Kobatake N."/>
            <person name="Inagaki H."/>
            <person name="Ikema Y."/>
            <person name="Okamoto S."/>
            <person name="Okitani R."/>
            <person name="Kawakami T."/>
            <person name="Noguchi S."/>
            <person name="Itoh T."/>
            <person name="Shigeta K."/>
            <person name="Senba T."/>
            <person name="Matsumura K."/>
            <person name="Nakajima Y."/>
            <person name="Mizuno T."/>
            <person name="Morinaga M."/>
            <person name="Sasaki M."/>
            <person name="Togashi T."/>
            <person name="Oyama M."/>
            <person name="Hata H."/>
            <person name="Watanabe M."/>
            <person name="Komatsu T."/>
            <person name="Mizushima-Sugano J."/>
            <person name="Satoh T."/>
            <person name="Shirai Y."/>
            <person name="Takahashi Y."/>
            <person name="Nakagawa K."/>
            <person name="Okumura K."/>
            <person name="Nagase T."/>
            <person name="Nomura N."/>
            <person name="Kikuchi H."/>
            <person name="Masuho Y."/>
            <person name="Yamashita R."/>
            <person name="Nakai K."/>
            <person name="Yada T."/>
            <person name="Nakamura Y."/>
            <person name="Ohara O."/>
            <person name="Isogai T."/>
            <person name="Sugano S."/>
        </authorList>
    </citation>
    <scope>NUCLEOTIDE SEQUENCE [LARGE SCALE MRNA]</scope>
    <source>
        <tissue>Liver</tissue>
    </source>
</reference>
<reference key="5">
    <citation type="submission" date="2005-09" db="EMBL/GenBank/DDBJ databases">
        <authorList>
            <person name="Mural R.J."/>
            <person name="Istrail S."/>
            <person name="Sutton G.G."/>
            <person name="Florea L."/>
            <person name="Halpern A.L."/>
            <person name="Mobarry C.M."/>
            <person name="Lippert R."/>
            <person name="Walenz B."/>
            <person name="Shatkay H."/>
            <person name="Dew I."/>
            <person name="Miller J.R."/>
            <person name="Flanigan M.J."/>
            <person name="Edwards N.J."/>
            <person name="Bolanos R."/>
            <person name="Fasulo D."/>
            <person name="Halldorsson B.V."/>
            <person name="Hannenhalli S."/>
            <person name="Turner R."/>
            <person name="Yooseph S."/>
            <person name="Lu F."/>
            <person name="Nusskern D.R."/>
            <person name="Shue B.C."/>
            <person name="Zheng X.H."/>
            <person name="Zhong F."/>
            <person name="Delcher A.L."/>
            <person name="Huson D.H."/>
            <person name="Kravitz S.A."/>
            <person name="Mouchard L."/>
            <person name="Reinert K."/>
            <person name="Remington K.A."/>
            <person name="Clark A.G."/>
            <person name="Waterman M.S."/>
            <person name="Eichler E.E."/>
            <person name="Adams M.D."/>
            <person name="Hunkapiller M.W."/>
            <person name="Myers E.W."/>
            <person name="Venter J.C."/>
        </authorList>
    </citation>
    <scope>NUCLEOTIDE SEQUENCE [LARGE SCALE GENOMIC DNA]</scope>
</reference>
<reference key="6">
    <citation type="journal article" date="2006" name="FEBS J.">
        <title>The narrow substrate specificity of human tyrosine aminotransferase -- the enzyme deficient in tyrosinemia type II.</title>
        <authorList>
            <person name="Sivaraman S."/>
            <person name="Kirsch J.F."/>
        </authorList>
    </citation>
    <scope>FUNCTION</scope>
    <scope>CATALYTIC ACTIVITY</scope>
    <scope>MUTAGENESIS OF ILE-294</scope>
</reference>
<reference key="7">
    <citation type="journal article" date="2014" name="J. Proteomics">
        <title>An enzyme assisted RP-RPLC approach for in-depth analysis of human liver phosphoproteome.</title>
        <authorList>
            <person name="Bian Y."/>
            <person name="Song C."/>
            <person name="Cheng K."/>
            <person name="Dong M."/>
            <person name="Wang F."/>
            <person name="Huang J."/>
            <person name="Sun D."/>
            <person name="Wang L."/>
            <person name="Ye M."/>
            <person name="Zou H."/>
        </authorList>
    </citation>
    <scope>PHOSPHORYLATION [LARGE SCALE ANALYSIS] AT SER-448</scope>
    <scope>IDENTIFICATION BY MASS SPECTROMETRY [LARGE SCALE ANALYSIS]</scope>
    <source>
        <tissue>Liver</tissue>
    </source>
</reference>
<reference key="8">
    <citation type="submission" date="2008-08" db="PDB data bank">
        <title>Human tyrosine aminotransferase.</title>
        <authorList>
            <consortium name="Structural genomics consortium (SGC)"/>
        </authorList>
    </citation>
    <scope>X-RAY CRYSTALLOGRAPHY (2.3 ANGSTROMS) OF 38-444 IN COMPLEX WITH PYRIDOXAL PHOSPHATE</scope>
</reference>
<reference key="9">
    <citation type="journal article" date="1992" name="Proc. Natl. Acad. Sci. U.S.A.">
        <title>Point mutations in the tyrosine aminotransferase gene in tyrosinemia type II.</title>
        <authorList>
            <person name="Natt E."/>
            <person name="Kida K."/>
            <person name="Odievre M."/>
            <person name="di Rocco M."/>
            <person name="Scherer G."/>
        </authorList>
    </citation>
    <scope>VARIANT TYRSN2 VAL-362</scope>
</reference>
<protein>
    <recommendedName>
        <fullName>Tyrosine aminotransferase</fullName>
        <shortName>TAT</shortName>
        <ecNumber>2.6.1.5</ecNumber>
    </recommendedName>
    <alternativeName>
        <fullName>L-tyrosine:2-oxoglutarate aminotransferase</fullName>
    </alternativeName>
</protein>
<feature type="chain" id="PRO_0000123887" description="Tyrosine aminotransferase">
    <location>
        <begin position="1"/>
        <end position="454"/>
    </location>
</feature>
<feature type="modified residue" description="N-acetylmethionine" evidence="1">
    <location>
        <position position="1"/>
    </location>
</feature>
<feature type="modified residue" description="N6-(pyridoxal phosphate)lysine" evidence="5 8">
    <location>
        <position position="280"/>
    </location>
</feature>
<feature type="modified residue" description="Phosphoserine" evidence="9">
    <location>
        <position position="448"/>
    </location>
</feature>
<feature type="sequence variant" id="VAR_048226" description="In dbSNP:rs16973344.">
    <original>N</original>
    <variation>D</variation>
    <location>
        <position position="70"/>
    </location>
</feature>
<feature type="sequence variant" id="VAR_000560" description="In TYRSN2; dbSNP:rs587776511." evidence="2">
    <original>G</original>
    <variation>V</variation>
    <location>
        <position position="362"/>
    </location>
</feature>
<feature type="mutagenesis site" description="Reduced catalytic activity." evidence="3">
    <original>I</original>
    <variation>A</variation>
    <location>
        <position position="294"/>
    </location>
</feature>
<feature type="turn" evidence="10">
    <location>
        <begin position="81"/>
        <end position="84"/>
    </location>
</feature>
<feature type="strand" evidence="10">
    <location>
        <begin position="85"/>
        <end position="87"/>
    </location>
</feature>
<feature type="helix" evidence="10">
    <location>
        <begin position="91"/>
        <end position="103"/>
    </location>
</feature>
<feature type="strand" evidence="10">
    <location>
        <begin position="106"/>
        <end position="108"/>
    </location>
</feature>
<feature type="helix" evidence="10">
    <location>
        <begin position="116"/>
        <end position="126"/>
    </location>
</feature>
<feature type="helix" evidence="10">
    <location>
        <begin position="135"/>
        <end position="137"/>
    </location>
</feature>
<feature type="strand" evidence="10">
    <location>
        <begin position="138"/>
        <end position="143"/>
    </location>
</feature>
<feature type="helix" evidence="10">
    <location>
        <begin position="144"/>
        <end position="155"/>
    </location>
</feature>
<feature type="strand" evidence="10">
    <location>
        <begin position="161"/>
        <end position="167"/>
    </location>
</feature>
<feature type="helix" evidence="10">
    <location>
        <begin position="171"/>
        <end position="178"/>
    </location>
</feature>
<feature type="strand" evidence="10">
    <location>
        <begin position="182"/>
        <end position="188"/>
    </location>
</feature>
<feature type="helix" evidence="10">
    <location>
        <begin position="190"/>
        <end position="192"/>
    </location>
</feature>
<feature type="helix" evidence="10">
    <location>
        <begin position="198"/>
        <end position="202"/>
    </location>
</feature>
<feature type="strand" evidence="10">
    <location>
        <begin position="209"/>
        <end position="217"/>
    </location>
</feature>
<feature type="turn" evidence="10">
    <location>
        <begin position="219"/>
        <end position="221"/>
    </location>
</feature>
<feature type="helix" evidence="10">
    <location>
        <begin position="227"/>
        <end position="239"/>
    </location>
</feature>
<feature type="strand" evidence="10">
    <location>
        <begin position="244"/>
        <end position="247"/>
    </location>
</feature>
<feature type="turn" evidence="10">
    <location>
        <begin position="249"/>
        <end position="252"/>
    </location>
</feature>
<feature type="helix" evidence="10">
    <location>
        <begin position="263"/>
        <end position="266"/>
    </location>
</feature>
<feature type="strand" evidence="10">
    <location>
        <begin position="272"/>
        <end position="278"/>
    </location>
</feature>
<feature type="turn" evidence="10">
    <location>
        <begin position="279"/>
        <end position="281"/>
    </location>
</feature>
<feature type="helix" evidence="10">
    <location>
        <begin position="285"/>
        <end position="287"/>
    </location>
</feature>
<feature type="strand" evidence="10">
    <location>
        <begin position="290"/>
        <end position="295"/>
    </location>
</feature>
<feature type="helix" evidence="10">
    <location>
        <begin position="302"/>
        <end position="316"/>
    </location>
</feature>
<feature type="helix" evidence="10">
    <location>
        <begin position="321"/>
        <end position="333"/>
    </location>
</feature>
<feature type="helix" evidence="10">
    <location>
        <begin position="336"/>
        <end position="359"/>
    </location>
</feature>
<feature type="strand" evidence="10">
    <location>
        <begin position="363"/>
        <end position="366"/>
    </location>
</feature>
<feature type="strand" evidence="10">
    <location>
        <begin position="373"/>
        <end position="378"/>
    </location>
</feature>
<feature type="helix" evidence="10">
    <location>
        <begin position="380"/>
        <end position="382"/>
    </location>
</feature>
<feature type="helix" evidence="10">
    <location>
        <begin position="389"/>
        <end position="400"/>
    </location>
</feature>
<feature type="helix" evidence="10">
    <location>
        <begin position="407"/>
        <end position="410"/>
    </location>
</feature>
<feature type="strand" evidence="10">
    <location>
        <begin position="415"/>
        <end position="420"/>
    </location>
</feature>
<feature type="helix" evidence="10">
    <location>
        <begin position="424"/>
        <end position="441"/>
    </location>
</feature>
<accession>P17735</accession>
<accession>B2R8I1</accession>
<accession>D3DWS2</accession>
<sequence length="454" mass="50399">MDPYMIQMSSKGNLPSILDVHVNVGGRSSVPGKMKGRKARWSVRPSDMAKKTFNPIRAIVDNMKVKPNPNKTMISLSIGDPTVFGNLPTDPEVTQAMKDALDSGKYNGYAPSIGFLSSREEIASYYHCPEAPLEAKDVILTSGCSQAIDLCLAVLANPGQNILVPRPGFSLYKTLAESMGIEVKLYNLLPEKSWEIDLKQLEYLIDEKTACLIVNNPSNPCGSVFSKRHLQKILAVAARQCVPILADEIYGDMVFSDCKYEPLATLSTDVPILSCGGLAKRWLVPGWRLGWILIHDRRDIFGNEIRDGLVKLSQRILGPCTIVQGALKSILCRTPGEFYHNTLSFLKSNADLCYGALAAIPGLRPVRPSGAMYLMVGIEMEHFPEFENDVEFTERLVAEQSVHCLPATCFEYPNFIRVVITVPEVMMLEACSRIQEFCEQHYHCAEGSQEECDK</sequence>